<dbReference type="EC" id="1.15.1.1"/>
<dbReference type="EMBL" id="AJ238316">
    <property type="protein sequence ID" value="CAB56851.1"/>
    <property type="molecule type" value="mRNA"/>
</dbReference>
<dbReference type="PIR" id="T50828">
    <property type="entry name" value="T50828"/>
</dbReference>
<dbReference type="SMR" id="Q9SM64"/>
<dbReference type="GO" id="GO:0005759">
    <property type="term" value="C:mitochondrial matrix"/>
    <property type="evidence" value="ECO:0000250"/>
    <property type="project" value="UniProtKB"/>
</dbReference>
<dbReference type="GO" id="GO:0046872">
    <property type="term" value="F:metal ion binding"/>
    <property type="evidence" value="ECO:0007669"/>
    <property type="project" value="UniProtKB-KW"/>
</dbReference>
<dbReference type="GO" id="GO:0004784">
    <property type="term" value="F:superoxide dismutase activity"/>
    <property type="evidence" value="ECO:0000303"/>
    <property type="project" value="UniProtKB"/>
</dbReference>
<dbReference type="GO" id="GO:0019430">
    <property type="term" value="P:removal of superoxide radicals"/>
    <property type="evidence" value="ECO:0000303"/>
    <property type="project" value="UniProtKB"/>
</dbReference>
<dbReference type="FunFam" id="1.10.287.990:FF:000001">
    <property type="entry name" value="Superoxide dismutase"/>
    <property type="match status" value="1"/>
</dbReference>
<dbReference type="FunFam" id="3.55.40.20:FF:000002">
    <property type="entry name" value="Superoxide dismutase"/>
    <property type="match status" value="1"/>
</dbReference>
<dbReference type="Gene3D" id="1.10.287.990">
    <property type="entry name" value="Fe,Mn superoxide dismutase (SOD) domain"/>
    <property type="match status" value="1"/>
</dbReference>
<dbReference type="Gene3D" id="3.55.40.20">
    <property type="entry name" value="Iron/manganese superoxide dismutase, C-terminal domain"/>
    <property type="match status" value="1"/>
</dbReference>
<dbReference type="InterPro" id="IPR050265">
    <property type="entry name" value="Fe/Mn_Superoxide_Dismutase"/>
</dbReference>
<dbReference type="InterPro" id="IPR001189">
    <property type="entry name" value="Mn/Fe_SOD"/>
</dbReference>
<dbReference type="InterPro" id="IPR019833">
    <property type="entry name" value="Mn/Fe_SOD_BS"/>
</dbReference>
<dbReference type="InterPro" id="IPR019832">
    <property type="entry name" value="Mn/Fe_SOD_C"/>
</dbReference>
<dbReference type="InterPro" id="IPR019831">
    <property type="entry name" value="Mn/Fe_SOD_N"/>
</dbReference>
<dbReference type="InterPro" id="IPR036324">
    <property type="entry name" value="Mn/Fe_SOD_N_sf"/>
</dbReference>
<dbReference type="InterPro" id="IPR036314">
    <property type="entry name" value="SOD_C_sf"/>
</dbReference>
<dbReference type="PANTHER" id="PTHR11404:SF44">
    <property type="entry name" value="SUPEROXIDE DISMUTASE"/>
    <property type="match status" value="1"/>
</dbReference>
<dbReference type="PANTHER" id="PTHR11404">
    <property type="entry name" value="SUPEROXIDE DISMUTASE 2"/>
    <property type="match status" value="1"/>
</dbReference>
<dbReference type="Pfam" id="PF02777">
    <property type="entry name" value="Sod_Fe_C"/>
    <property type="match status" value="1"/>
</dbReference>
<dbReference type="Pfam" id="PF00081">
    <property type="entry name" value="Sod_Fe_N"/>
    <property type="match status" value="1"/>
</dbReference>
<dbReference type="PIRSF" id="PIRSF000349">
    <property type="entry name" value="SODismutase"/>
    <property type="match status" value="1"/>
</dbReference>
<dbReference type="PRINTS" id="PR01703">
    <property type="entry name" value="MNSODISMTASE"/>
</dbReference>
<dbReference type="SUPFAM" id="SSF54719">
    <property type="entry name" value="Fe,Mn superoxide dismutase (SOD), C-terminal domain"/>
    <property type="match status" value="1"/>
</dbReference>
<dbReference type="SUPFAM" id="SSF46609">
    <property type="entry name" value="Fe,Mn superoxide dismutase (SOD), N-terminal domain"/>
    <property type="match status" value="1"/>
</dbReference>
<dbReference type="PROSITE" id="PS00088">
    <property type="entry name" value="SOD_MN"/>
    <property type="match status" value="1"/>
</dbReference>
<comment type="function">
    <text evidence="1">Destroys superoxide anion radicals which are normally produced within the cells and which are toxic to biological systems.</text>
</comment>
<comment type="catalytic activity">
    <reaction evidence="4 6">
        <text>2 superoxide + 2 H(+) = H2O2 + O2</text>
        <dbReference type="Rhea" id="RHEA:20696"/>
        <dbReference type="ChEBI" id="CHEBI:15378"/>
        <dbReference type="ChEBI" id="CHEBI:15379"/>
        <dbReference type="ChEBI" id="CHEBI:16240"/>
        <dbReference type="ChEBI" id="CHEBI:18421"/>
        <dbReference type="EC" id="1.15.1.1"/>
    </reaction>
</comment>
<comment type="cofactor">
    <cofactor evidence="3">
        <name>Mn(2+)</name>
        <dbReference type="ChEBI" id="CHEBI:29035"/>
    </cofactor>
    <text evidence="3">Binds 1 Mn(2+) ion per subunit.</text>
</comment>
<comment type="subunit">
    <text evidence="2">Homotetramer.</text>
</comment>
<comment type="subcellular location">
    <subcellularLocation>
        <location evidence="1">Mitochondrion matrix</location>
    </subcellularLocation>
</comment>
<comment type="tissue specificity">
    <text evidence="5">Expressed most abundantly in parts of the plant which exhibit a high metabolic activity. Expressed in pre-shooting flower buds, vegetative buds, immature fruits and fully expanded leaves of basal shoots and seedlings.</text>
</comment>
<comment type="developmental stage">
    <text evidence="5">The level of expression in seedlings and in juvenile plants is higher than the level of expression in adult plants.</text>
</comment>
<comment type="similarity">
    <text evidence="4 6">Belongs to the iron/manganese superoxide dismutase family.</text>
</comment>
<name>SODM_PRUPE</name>
<organism evidence="7">
    <name type="scientific">Prunus persica</name>
    <name type="common">Peach</name>
    <name type="synonym">Amygdalus persica</name>
    <dbReference type="NCBI Taxonomy" id="3760"/>
    <lineage>
        <taxon>Eukaryota</taxon>
        <taxon>Viridiplantae</taxon>
        <taxon>Streptophyta</taxon>
        <taxon>Embryophyta</taxon>
        <taxon>Tracheophyta</taxon>
        <taxon>Spermatophyta</taxon>
        <taxon>Magnoliopsida</taxon>
        <taxon>eudicotyledons</taxon>
        <taxon>Gunneridae</taxon>
        <taxon>Pentapetalae</taxon>
        <taxon>rosids</taxon>
        <taxon>fabids</taxon>
        <taxon>Rosales</taxon>
        <taxon>Rosaceae</taxon>
        <taxon>Amygdaloideae</taxon>
        <taxon>Amygdaleae</taxon>
        <taxon>Prunus</taxon>
    </lineage>
</organism>
<feature type="transit peptide" description="Mitochondrion" evidence="1">
    <location>
        <begin position="1"/>
        <end position="24"/>
    </location>
</feature>
<feature type="chain" id="PRO_0000032902" description="Superoxide dismutase [Mn], mitochondrial">
    <location>
        <begin position="25"/>
        <end position="228"/>
    </location>
</feature>
<feature type="binding site" evidence="1">
    <location>
        <position position="52"/>
    </location>
    <ligand>
        <name>Mn(2+)</name>
        <dbReference type="ChEBI" id="CHEBI:29035"/>
    </ligand>
</feature>
<feature type="binding site" evidence="1">
    <location>
        <position position="100"/>
    </location>
    <ligand>
        <name>Mn(2+)</name>
        <dbReference type="ChEBI" id="CHEBI:29035"/>
    </ligand>
</feature>
<feature type="binding site" evidence="1">
    <location>
        <position position="189"/>
    </location>
    <ligand>
        <name>Mn(2+)</name>
        <dbReference type="ChEBI" id="CHEBI:29035"/>
    </ligand>
</feature>
<feature type="binding site" evidence="1">
    <location>
        <position position="193"/>
    </location>
    <ligand>
        <name>Mn(2+)</name>
        <dbReference type="ChEBI" id="CHEBI:29035"/>
    </ligand>
</feature>
<gene>
    <name type="primary">SOD</name>
    <name type="synonym">MNSOD1</name>
</gene>
<protein>
    <recommendedName>
        <fullName>Superoxide dismutase [Mn], mitochondrial</fullName>
        <ecNumber>1.15.1.1</ecNumber>
    </recommendedName>
</protein>
<keyword id="KW-0464">Manganese</keyword>
<keyword id="KW-0479">Metal-binding</keyword>
<keyword id="KW-0496">Mitochondrion</keyword>
<keyword id="KW-0560">Oxidoreductase</keyword>
<keyword id="KW-0809">Transit peptide</keyword>
<reference evidence="6" key="1">
    <citation type="journal article" date="2002" name="Mol. Genet. Genomics">
        <title>Molecular cloning, characterisation and expression of a manganese superoxide dismutase gene from peach (Prunus persica L. Batsch).</title>
        <authorList>
            <person name="Bagnoli F."/>
            <person name="Giannino D."/>
            <person name="Caparrini S."/>
            <person name="Camussi A."/>
            <person name="Mariotti D."/>
            <person name="Racchi M.L."/>
        </authorList>
    </citation>
    <scope>NUCLEOTIDE SEQUENCE [MRNA]</scope>
    <scope>TISSUE SPECIFICITY</scope>
    <scope>DEVELOPMENTAL STAGE</scope>
    <source>
        <strain evidence="5">cv. Chiripa</strain>
        <tissue evidence="7">Leaf</tissue>
    </source>
</reference>
<proteinExistence type="evidence at transcript level"/>
<accession>Q9SM64</accession>
<sequence length="228" mass="25455">MALRTLVSRRTLATGLGFRQQLRGLQTFSLPDLPYNYGALEPAISGDIMQLHHQNHHQTYVTNYNKALEQLHDAISKGDAPTVAKLHSAIKFNGGGHINHSIFWKNLAPVREGGGEPPKGSLGWAIDTNFGSLEALVQKMNAEGAALQGSGWVWLALDKELKKLVVETTANQDPLVTKGPTLVPLLGIDVWEHAYYLQYKNVRPDYLKNIWKVINWKYASEVYEKESP</sequence>
<evidence type="ECO:0000250" key="1"/>
<evidence type="ECO:0000250" key="2">
    <source>
        <dbReference type="UniProtKB" id="P11796"/>
    </source>
</evidence>
<evidence type="ECO:0000250" key="3">
    <source>
        <dbReference type="UniProtKB" id="Q92450"/>
    </source>
</evidence>
<evidence type="ECO:0000255" key="4">
    <source>
        <dbReference type="RuleBase" id="RU000414"/>
    </source>
</evidence>
<evidence type="ECO:0000269" key="5">
    <source>
    </source>
</evidence>
<evidence type="ECO:0000305" key="6"/>
<evidence type="ECO:0000312" key="7">
    <source>
        <dbReference type="EMBL" id="CAB56851.1"/>
    </source>
</evidence>